<evidence type="ECO:0000255" key="1">
    <source>
        <dbReference type="PROSITE-ProRule" id="PRU01188"/>
    </source>
</evidence>
<evidence type="ECO:0000256" key="2">
    <source>
        <dbReference type="SAM" id="MobiDB-lite"/>
    </source>
</evidence>
<evidence type="ECO:0000269" key="3">
    <source>
    </source>
</evidence>
<evidence type="ECO:0000269" key="4">
    <source>
    </source>
</evidence>
<evidence type="ECO:0000269" key="5">
    <source ref="3"/>
</evidence>
<keyword id="KW-0175">Coiled coil</keyword>
<keyword id="KW-0403">Intermediate filament</keyword>
<keyword id="KW-0416">Keratin</keyword>
<keyword id="KW-1267">Proteomics identification</keyword>
<keyword id="KW-1185">Reference proteome</keyword>
<proteinExistence type="evidence at protein level"/>
<gene>
    <name type="primary">KRT79</name>
    <name type="synonym">K6L</name>
    <name type="synonym">KB38</name>
    <name type="synonym">KRT6L</name>
</gene>
<organism>
    <name type="scientific">Homo sapiens</name>
    <name type="common">Human</name>
    <dbReference type="NCBI Taxonomy" id="9606"/>
    <lineage>
        <taxon>Eukaryota</taxon>
        <taxon>Metazoa</taxon>
        <taxon>Chordata</taxon>
        <taxon>Craniata</taxon>
        <taxon>Vertebrata</taxon>
        <taxon>Euteleostomi</taxon>
        <taxon>Mammalia</taxon>
        <taxon>Eutheria</taxon>
        <taxon>Euarchontoglires</taxon>
        <taxon>Primates</taxon>
        <taxon>Haplorrhini</taxon>
        <taxon>Catarrhini</taxon>
        <taxon>Hominidae</taxon>
        <taxon>Homo</taxon>
    </lineage>
</organism>
<reference key="1">
    <citation type="journal article" date="2005" name="J. Invest. Dermatol.">
        <title>Characterization of new members of the human type II keratin gene family and a general evaluation of the keratin gene domain on chromosome 12q13.13.</title>
        <authorList>
            <person name="Rogers M.A."/>
            <person name="Edler L."/>
            <person name="Winter H."/>
            <person name="Langbein L."/>
            <person name="Beckmann I."/>
            <person name="Schweizer J."/>
        </authorList>
    </citation>
    <scope>NUCLEOTIDE SEQUENCE [MRNA]</scope>
    <scope>TISSUE SPECIFICITY</scope>
    <source>
        <tissue>Skin</tissue>
    </source>
</reference>
<reference key="2">
    <citation type="journal article" date="2006" name="Nature">
        <title>The finished DNA sequence of human chromosome 12.</title>
        <authorList>
            <person name="Scherer S.E."/>
            <person name="Muzny D.M."/>
            <person name="Buhay C.J."/>
            <person name="Chen R."/>
            <person name="Cree A."/>
            <person name="Ding Y."/>
            <person name="Dugan-Rocha S."/>
            <person name="Gill R."/>
            <person name="Gunaratne P."/>
            <person name="Harris R.A."/>
            <person name="Hawes A.C."/>
            <person name="Hernandez J."/>
            <person name="Hodgson A.V."/>
            <person name="Hume J."/>
            <person name="Jackson A."/>
            <person name="Khan Z.M."/>
            <person name="Kovar-Smith C."/>
            <person name="Lewis L.R."/>
            <person name="Lozado R.J."/>
            <person name="Metzker M.L."/>
            <person name="Milosavljevic A."/>
            <person name="Miner G.R."/>
            <person name="Montgomery K.T."/>
            <person name="Morgan M.B."/>
            <person name="Nazareth L.V."/>
            <person name="Scott G."/>
            <person name="Sodergren E."/>
            <person name="Song X.-Z."/>
            <person name="Steffen D."/>
            <person name="Lovering R.C."/>
            <person name="Wheeler D.A."/>
            <person name="Worley K.C."/>
            <person name="Yuan Y."/>
            <person name="Zhang Z."/>
            <person name="Adams C.Q."/>
            <person name="Ansari-Lari M.A."/>
            <person name="Ayele M."/>
            <person name="Brown M.J."/>
            <person name="Chen G."/>
            <person name="Chen Z."/>
            <person name="Clerc-Blankenburg K.P."/>
            <person name="Davis C."/>
            <person name="Delgado O."/>
            <person name="Dinh H.H."/>
            <person name="Draper H."/>
            <person name="Gonzalez-Garay M.L."/>
            <person name="Havlak P."/>
            <person name="Jackson L.R."/>
            <person name="Jacob L.S."/>
            <person name="Kelly S.H."/>
            <person name="Li L."/>
            <person name="Li Z."/>
            <person name="Liu J."/>
            <person name="Liu W."/>
            <person name="Lu J."/>
            <person name="Maheshwari M."/>
            <person name="Nguyen B.-V."/>
            <person name="Okwuonu G.O."/>
            <person name="Pasternak S."/>
            <person name="Perez L.M."/>
            <person name="Plopper F.J.H."/>
            <person name="Santibanez J."/>
            <person name="Shen H."/>
            <person name="Tabor P.E."/>
            <person name="Verduzco D."/>
            <person name="Waldron L."/>
            <person name="Wang Q."/>
            <person name="Williams G.A."/>
            <person name="Zhang J."/>
            <person name="Zhou J."/>
            <person name="Allen C.C."/>
            <person name="Amin A.G."/>
            <person name="Anyalebechi V."/>
            <person name="Bailey M."/>
            <person name="Barbaria J.A."/>
            <person name="Bimage K.E."/>
            <person name="Bryant N.P."/>
            <person name="Burch P.E."/>
            <person name="Burkett C.E."/>
            <person name="Burrell K.L."/>
            <person name="Calderon E."/>
            <person name="Cardenas V."/>
            <person name="Carter K."/>
            <person name="Casias K."/>
            <person name="Cavazos I."/>
            <person name="Cavazos S.R."/>
            <person name="Ceasar H."/>
            <person name="Chacko J."/>
            <person name="Chan S.N."/>
            <person name="Chavez D."/>
            <person name="Christopoulos C."/>
            <person name="Chu J."/>
            <person name="Cockrell R."/>
            <person name="Cox C.D."/>
            <person name="Dang M."/>
            <person name="Dathorne S.R."/>
            <person name="David R."/>
            <person name="Davis C.M."/>
            <person name="Davy-Carroll L."/>
            <person name="Deshazo D.R."/>
            <person name="Donlin J.E."/>
            <person name="D'Souza L."/>
            <person name="Eaves K.A."/>
            <person name="Egan A."/>
            <person name="Emery-Cohen A.J."/>
            <person name="Escotto M."/>
            <person name="Flagg N."/>
            <person name="Forbes L.D."/>
            <person name="Gabisi A.M."/>
            <person name="Garza M."/>
            <person name="Hamilton C."/>
            <person name="Henderson N."/>
            <person name="Hernandez O."/>
            <person name="Hines S."/>
            <person name="Hogues M.E."/>
            <person name="Huang M."/>
            <person name="Idlebird D.G."/>
            <person name="Johnson R."/>
            <person name="Jolivet A."/>
            <person name="Jones S."/>
            <person name="Kagan R."/>
            <person name="King L.M."/>
            <person name="Leal B."/>
            <person name="Lebow H."/>
            <person name="Lee S."/>
            <person name="LeVan J.M."/>
            <person name="Lewis L.C."/>
            <person name="London P."/>
            <person name="Lorensuhewa L.M."/>
            <person name="Loulseged H."/>
            <person name="Lovett D.A."/>
            <person name="Lucier A."/>
            <person name="Lucier R.L."/>
            <person name="Ma J."/>
            <person name="Madu R.C."/>
            <person name="Mapua P."/>
            <person name="Martindale A.D."/>
            <person name="Martinez E."/>
            <person name="Massey E."/>
            <person name="Mawhiney S."/>
            <person name="Meador M.G."/>
            <person name="Mendez S."/>
            <person name="Mercado C."/>
            <person name="Mercado I.C."/>
            <person name="Merritt C.E."/>
            <person name="Miner Z.L."/>
            <person name="Minja E."/>
            <person name="Mitchell T."/>
            <person name="Mohabbat F."/>
            <person name="Mohabbat K."/>
            <person name="Montgomery B."/>
            <person name="Moore N."/>
            <person name="Morris S."/>
            <person name="Munidasa M."/>
            <person name="Ngo R.N."/>
            <person name="Nguyen N.B."/>
            <person name="Nickerson E."/>
            <person name="Nwaokelemeh O.O."/>
            <person name="Nwokenkwo S."/>
            <person name="Obregon M."/>
            <person name="Oguh M."/>
            <person name="Oragunye N."/>
            <person name="Oviedo R.J."/>
            <person name="Parish B.J."/>
            <person name="Parker D.N."/>
            <person name="Parrish J."/>
            <person name="Parks K.L."/>
            <person name="Paul H.A."/>
            <person name="Payton B.A."/>
            <person name="Perez A."/>
            <person name="Perrin W."/>
            <person name="Pickens A."/>
            <person name="Primus E.L."/>
            <person name="Pu L.-L."/>
            <person name="Puazo M."/>
            <person name="Quiles M.M."/>
            <person name="Quiroz J.B."/>
            <person name="Rabata D."/>
            <person name="Reeves K."/>
            <person name="Ruiz S.J."/>
            <person name="Shao H."/>
            <person name="Sisson I."/>
            <person name="Sonaike T."/>
            <person name="Sorelle R.P."/>
            <person name="Sutton A.E."/>
            <person name="Svatek A.F."/>
            <person name="Svetz L.A."/>
            <person name="Tamerisa K.S."/>
            <person name="Taylor T.R."/>
            <person name="Teague B."/>
            <person name="Thomas N."/>
            <person name="Thorn R.D."/>
            <person name="Trejos Z.Y."/>
            <person name="Trevino B.K."/>
            <person name="Ukegbu O.N."/>
            <person name="Urban J.B."/>
            <person name="Vasquez L.I."/>
            <person name="Vera V.A."/>
            <person name="Villasana D.M."/>
            <person name="Wang L."/>
            <person name="Ward-Moore S."/>
            <person name="Warren J.T."/>
            <person name="Wei X."/>
            <person name="White F."/>
            <person name="Williamson A.L."/>
            <person name="Wleczyk R."/>
            <person name="Wooden H.S."/>
            <person name="Wooden S.H."/>
            <person name="Yen J."/>
            <person name="Yoon L."/>
            <person name="Yoon V."/>
            <person name="Zorrilla S.E."/>
            <person name="Nelson D."/>
            <person name="Kucherlapati R."/>
            <person name="Weinstock G."/>
            <person name="Gibbs R.A."/>
        </authorList>
    </citation>
    <scope>NUCLEOTIDE SEQUENCE [LARGE SCALE GENOMIC DNA]</scope>
</reference>
<reference key="3">
    <citation type="submission" date="2005-07" db="EMBL/GenBank/DDBJ databases">
        <authorList>
            <person name="Mural R.J."/>
            <person name="Istrail S."/>
            <person name="Sutton G.G."/>
            <person name="Florea L."/>
            <person name="Halpern A.L."/>
            <person name="Mobarry C.M."/>
            <person name="Lippert R."/>
            <person name="Walenz B."/>
            <person name="Shatkay H."/>
            <person name="Dew I."/>
            <person name="Miller J.R."/>
            <person name="Flanigan M.J."/>
            <person name="Edwards N.J."/>
            <person name="Bolanos R."/>
            <person name="Fasulo D."/>
            <person name="Halldorsson B.V."/>
            <person name="Hannenhalli S."/>
            <person name="Turner R."/>
            <person name="Yooseph S."/>
            <person name="Lu F."/>
            <person name="Nusskern D.R."/>
            <person name="Shue B.C."/>
            <person name="Zheng X.H."/>
            <person name="Zhong F."/>
            <person name="Delcher A.L."/>
            <person name="Huson D.H."/>
            <person name="Kravitz S.A."/>
            <person name="Mouchard L."/>
            <person name="Reinert K."/>
            <person name="Remington K.A."/>
            <person name="Clark A.G."/>
            <person name="Waterman M.S."/>
            <person name="Eichler E.E."/>
            <person name="Adams M.D."/>
            <person name="Hunkapiller M.W."/>
            <person name="Myers E.W."/>
            <person name="Venter J.C."/>
        </authorList>
    </citation>
    <scope>NUCLEOTIDE SEQUENCE [LARGE SCALE GENOMIC DNA]</scope>
    <scope>VARIANT SER-81</scope>
</reference>
<reference key="4">
    <citation type="journal article" date="2004" name="Genome Res.">
        <title>The status, quality, and expansion of the NIH full-length cDNA project: the Mammalian Gene Collection (MGC).</title>
        <authorList>
            <consortium name="The MGC Project Team"/>
        </authorList>
    </citation>
    <scope>NUCLEOTIDE SEQUENCE [LARGE SCALE MRNA]</scope>
    <scope>VARIANTS SER-81 AND LEU-195</scope>
    <source>
        <tissue>Skin</tissue>
    </source>
</reference>
<reference key="5">
    <citation type="journal article" date="2001" name="J. Cell Sci.">
        <title>Genes for intermediate filament proteins and the draft sequence of the human genome: novel keratin genes and a surprisingly high number of pseudogenes related to keratin genes 8 and 18.</title>
        <authorList>
            <person name="Hesse M."/>
            <person name="Magin T.M."/>
            <person name="Weber K."/>
        </authorList>
    </citation>
    <scope>IDENTIFICATION</scope>
</reference>
<reference key="6">
    <citation type="journal article" date="2011" name="BMC Syst. Biol.">
        <title>Initial characterization of the human central proteome.</title>
        <authorList>
            <person name="Burkard T.R."/>
            <person name="Planyavsky M."/>
            <person name="Kaupe I."/>
            <person name="Breitwieser F.P."/>
            <person name="Buerckstuemmer T."/>
            <person name="Bennett K.L."/>
            <person name="Superti-Furga G."/>
            <person name="Colinge J."/>
        </authorList>
    </citation>
    <scope>IDENTIFICATION BY MASS SPECTROMETRY [LARGE SCALE ANALYSIS]</scope>
</reference>
<name>K2C79_HUMAN</name>
<feature type="chain" id="PRO_0000314893" description="Keratin, type II cytoskeletal 79">
    <location>
        <begin position="1"/>
        <end position="535"/>
    </location>
</feature>
<feature type="domain" description="IF rod" evidence="1">
    <location>
        <begin position="142"/>
        <end position="457"/>
    </location>
</feature>
<feature type="region of interest" description="Head">
    <location>
        <begin position="1"/>
        <end position="141"/>
    </location>
</feature>
<feature type="region of interest" description="Disordered" evidence="2">
    <location>
        <begin position="1"/>
        <end position="52"/>
    </location>
</feature>
<feature type="region of interest" description="Coil 1A">
    <location>
        <begin position="142"/>
        <end position="177"/>
    </location>
</feature>
<feature type="region of interest" description="Linker 1">
    <location>
        <begin position="178"/>
        <end position="198"/>
    </location>
</feature>
<feature type="region of interest" description="Coil 1B">
    <location>
        <begin position="199"/>
        <end position="290"/>
    </location>
</feature>
<feature type="region of interest" description="Linker 12">
    <location>
        <begin position="291"/>
        <end position="314"/>
    </location>
</feature>
<feature type="region of interest" description="Coil 2">
    <location>
        <begin position="315"/>
        <end position="453"/>
    </location>
</feature>
<feature type="region of interest" description="Tail">
    <location>
        <begin position="454"/>
        <end position="535"/>
    </location>
</feature>
<feature type="compositionally biased region" description="Polar residues" evidence="2">
    <location>
        <begin position="1"/>
        <end position="12"/>
    </location>
</feature>
<feature type="compositionally biased region" description="Low complexity" evidence="2">
    <location>
        <begin position="32"/>
        <end position="42"/>
    </location>
</feature>
<feature type="compositionally biased region" description="Gly residues" evidence="2">
    <location>
        <begin position="43"/>
        <end position="52"/>
    </location>
</feature>
<feature type="site" description="Stutter">
    <location>
        <position position="395"/>
    </location>
</feature>
<feature type="sequence variant" id="VAR_038113" description="In dbSNP:rs2638497." evidence="3 5">
    <original>L</original>
    <variation>S</variation>
    <location>
        <position position="81"/>
    </location>
</feature>
<feature type="sequence variant" id="VAR_038114" description="In dbSNP:rs17855862." evidence="3">
    <original>F</original>
    <variation>L</variation>
    <location>
        <position position="195"/>
    </location>
</feature>
<feature type="sequence variant" id="VAR_038115" description="In dbSNP:rs17688672.">
    <original>H</original>
    <variation>R</variation>
    <location>
        <position position="266"/>
    </location>
</feature>
<feature type="sequence variant" id="VAR_038116" description="In dbSNP:rs17688627.">
    <original>A</original>
    <variation>V</variation>
    <location>
        <position position="393"/>
    </location>
</feature>
<comment type="subunit">
    <text>Heterotetramer of two type I and two type II keratins.</text>
</comment>
<comment type="interaction">
    <interactant intactId="EBI-2514135">
        <id>Q5XKE5</id>
    </interactant>
    <interactant intactId="EBI-749523">
        <id>Q96CN4</id>
        <label>EVI5L</label>
    </interactant>
    <organismsDiffer>false</organismsDiffer>
    <experiments>3</experiments>
</comment>
<comment type="interaction">
    <interactant intactId="EBI-2514135">
        <id>Q5XKE5</id>
    </interactant>
    <interactant intactId="EBI-10171552">
        <id>A1A4E9</id>
        <label>KRT13</label>
    </interactant>
    <organismsDiffer>false</organismsDiffer>
    <experiments>3</experiments>
</comment>
<comment type="interaction">
    <interactant intactId="EBI-2514135">
        <id>Q5XKE5</id>
    </interactant>
    <interactant intactId="EBI-702178">
        <id>P02533</id>
        <label>KRT14</label>
    </interactant>
    <organismsDiffer>false</organismsDiffer>
    <experiments>3</experiments>
</comment>
<comment type="interaction">
    <interactant intactId="EBI-2514135">
        <id>Q5XKE5</id>
    </interactant>
    <interactant intactId="EBI-739566">
        <id>P19012</id>
        <label>KRT15</label>
    </interactant>
    <organismsDiffer>false</organismsDiffer>
    <experiments>7</experiments>
</comment>
<comment type="interaction">
    <interactant intactId="EBI-2514135">
        <id>Q5XKE5</id>
    </interactant>
    <interactant intactId="EBI-356410">
        <id>P08779</id>
        <label>KRT16</label>
    </interactant>
    <organismsDiffer>false</organismsDiffer>
    <experiments>3</experiments>
</comment>
<comment type="interaction">
    <interactant intactId="EBI-2514135">
        <id>Q5XKE5</id>
    </interactant>
    <interactant intactId="EBI-297888">
        <id>P05783</id>
        <label>KRT18</label>
    </interactant>
    <organismsDiffer>false</organismsDiffer>
    <experiments>3</experiments>
</comment>
<comment type="interaction">
    <interactant intactId="EBI-2514135">
        <id>Q5XKE5</id>
    </interactant>
    <interactant intactId="EBI-742756">
        <id>P08727</id>
        <label>KRT19</label>
    </interactant>
    <organismsDiffer>false</organismsDiffer>
    <experiments>3</experiments>
</comment>
<comment type="interaction">
    <interactant intactId="EBI-2514135">
        <id>Q5XKE5</id>
    </interactant>
    <interactant intactId="EBI-2952736">
        <id>Q2M2I5</id>
        <label>KRT24</label>
    </interactant>
    <organismsDiffer>false</organismsDiffer>
    <experiments>3</experiments>
</comment>
<comment type="interaction">
    <interactant intactId="EBI-2514135">
        <id>Q5XKE5</id>
    </interactant>
    <interactant intactId="EBI-11980019">
        <id>Q7Z3Z0</id>
        <label>KRT25</label>
    </interactant>
    <organismsDiffer>false</organismsDiffer>
    <experiments>3</experiments>
</comment>
<comment type="interaction">
    <interactant intactId="EBI-2514135">
        <id>Q5XKE5</id>
    </interactant>
    <interactant intactId="EBI-3044087">
        <id>Q7Z3Y8</id>
        <label>KRT27</label>
    </interactant>
    <organismsDiffer>false</organismsDiffer>
    <experiments>4</experiments>
</comment>
<comment type="interaction">
    <interactant intactId="EBI-2514135">
        <id>Q5XKE5</id>
    </interactant>
    <interactant intactId="EBI-11980489">
        <id>Q7Z3Y7</id>
        <label>KRT28</label>
    </interactant>
    <organismsDiffer>false</organismsDiffer>
    <experiments>3</experiments>
</comment>
<comment type="interaction">
    <interactant intactId="EBI-2514135">
        <id>Q5XKE5</id>
    </interactant>
    <interactant intactId="EBI-948001">
        <id>Q15323</id>
        <label>KRT31</label>
    </interactant>
    <organismsDiffer>false</organismsDiffer>
    <experiments>6</experiments>
</comment>
<comment type="interaction">
    <interactant intactId="EBI-2514135">
        <id>Q5XKE5</id>
    </interactant>
    <interactant intactId="EBI-1049638">
        <id>Q14525</id>
        <label>KRT33B</label>
    </interactant>
    <organismsDiffer>false</organismsDiffer>
    <experiments>8</experiments>
</comment>
<comment type="interaction">
    <interactant intactId="EBI-2514135">
        <id>Q5XKE5</id>
    </interactant>
    <interactant intactId="EBI-1047093">
        <id>O76011</id>
        <label>KRT34</label>
    </interactant>
    <organismsDiffer>false</organismsDiffer>
    <experiments>3</experiments>
</comment>
<comment type="interaction">
    <interactant intactId="EBI-2514135">
        <id>Q5XKE5</id>
    </interactant>
    <interactant intactId="EBI-1058674">
        <id>Q92764</id>
        <label>KRT35</label>
    </interactant>
    <organismsDiffer>false</organismsDiffer>
    <experiments>3</experiments>
</comment>
<comment type="interaction">
    <interactant intactId="EBI-2514135">
        <id>Q5XKE5</id>
    </interactant>
    <interactant intactId="EBI-11958506">
        <id>O76013-2</id>
        <label>KRT36</label>
    </interactant>
    <organismsDiffer>false</organismsDiffer>
    <experiments>3</experiments>
</comment>
<comment type="interaction">
    <interactant intactId="EBI-2514135">
        <id>Q5XKE5</id>
    </interactant>
    <interactant intactId="EBI-1047263">
        <id>O76015</id>
        <label>KRT38</label>
    </interactant>
    <organismsDiffer>false</organismsDiffer>
    <experiments>6</experiments>
</comment>
<comment type="interaction">
    <interactant intactId="EBI-2514135">
        <id>Q5XKE5</id>
    </interactant>
    <interactant intactId="EBI-10283466">
        <id>A1L190</id>
        <label>SYCE3</label>
    </interactant>
    <organismsDiffer>false</organismsDiffer>
    <experiments>3</experiments>
</comment>
<comment type="interaction">
    <interactant intactId="EBI-2514135">
        <id>Q5XKE5</id>
    </interactant>
    <interactant intactId="EBI-2130429">
        <id>Q9BYV2</id>
        <label>TRIM54</label>
    </interactant>
    <organismsDiffer>false</organismsDiffer>
    <experiments>3</experiments>
</comment>
<comment type="interaction">
    <interactant intactId="EBI-2514135">
        <id>Q5XKE5</id>
    </interactant>
    <interactant intactId="EBI-739895">
        <id>Q8N6Y0</id>
        <label>USHBP1</label>
    </interactant>
    <organismsDiffer>false</organismsDiffer>
    <experiments>3</experiments>
</comment>
<comment type="tissue specificity">
    <text evidence="4">Expressed in skeletal muscle, skin and scalp, but not in any other tissues or organs examined.</text>
</comment>
<comment type="miscellaneous">
    <text>There are two types of cytoskeletal and microfibrillar keratin, I (acidic) and II (neutral to basic) (40-55 and 56-70 kDa, respectively).</text>
</comment>
<comment type="similarity">
    <text evidence="1">Belongs to the intermediate filament family.</text>
</comment>
<dbReference type="EMBL" id="AJ564105">
    <property type="protein sequence ID" value="CAD91893.1"/>
    <property type="molecule type" value="mRNA"/>
</dbReference>
<dbReference type="EMBL" id="AC107016">
    <property type="status" value="NOT_ANNOTATED_CDS"/>
    <property type="molecule type" value="Genomic_DNA"/>
</dbReference>
<dbReference type="EMBL" id="CH471054">
    <property type="protein sequence ID" value="EAW96648.1"/>
    <property type="molecule type" value="Genomic_DNA"/>
</dbReference>
<dbReference type="EMBL" id="BC039148">
    <property type="protein sequence ID" value="AAH39148.1"/>
    <property type="molecule type" value="mRNA"/>
</dbReference>
<dbReference type="EMBL" id="BC063648">
    <property type="protein sequence ID" value="AAH63648.1"/>
    <property type="molecule type" value="mRNA"/>
</dbReference>
<dbReference type="EMBL" id="BK000976">
    <property type="protein sequence ID" value="DAA00403.1"/>
    <property type="molecule type" value="Genomic_DNA"/>
</dbReference>
<dbReference type="CCDS" id="CCDS8839.1"/>
<dbReference type="RefSeq" id="NP_787028.1">
    <property type="nucleotide sequence ID" value="NM_175834.3"/>
</dbReference>
<dbReference type="SMR" id="Q5XKE5"/>
<dbReference type="BioGRID" id="130796">
    <property type="interactions" value="63"/>
</dbReference>
<dbReference type="FunCoup" id="Q5XKE5">
    <property type="interactions" value="345"/>
</dbReference>
<dbReference type="IntAct" id="Q5XKE5">
    <property type="interactions" value="32"/>
</dbReference>
<dbReference type="MINT" id="Q5XKE5"/>
<dbReference type="STRING" id="9606.ENSP00000328358"/>
<dbReference type="GlyGen" id="Q5XKE5">
    <property type="glycosylation" value="1 site, 1 O-linked glycan (1 site)"/>
</dbReference>
<dbReference type="iPTMnet" id="Q5XKE5"/>
<dbReference type="PhosphoSitePlus" id="Q5XKE5"/>
<dbReference type="SwissPalm" id="Q5XKE5"/>
<dbReference type="BioMuta" id="KRT79"/>
<dbReference type="DMDM" id="296434550"/>
<dbReference type="jPOST" id="Q5XKE5"/>
<dbReference type="MassIVE" id="Q5XKE5"/>
<dbReference type="PaxDb" id="9606-ENSP00000328358"/>
<dbReference type="PeptideAtlas" id="Q5XKE5"/>
<dbReference type="PRIDE" id="Q5XKE5"/>
<dbReference type="ProteomicsDB" id="65826"/>
<dbReference type="Antibodypedia" id="26699">
    <property type="antibodies" value="110 antibodies from 15 providers"/>
</dbReference>
<dbReference type="DNASU" id="338785"/>
<dbReference type="Ensembl" id="ENST00000330553.6">
    <property type="protein sequence ID" value="ENSP00000328358.5"/>
    <property type="gene ID" value="ENSG00000185640.6"/>
</dbReference>
<dbReference type="GeneID" id="338785"/>
<dbReference type="KEGG" id="hsa:338785"/>
<dbReference type="MANE-Select" id="ENST00000330553.6">
    <property type="protein sequence ID" value="ENSP00000328358.5"/>
    <property type="RefSeq nucleotide sequence ID" value="NM_175834.3"/>
    <property type="RefSeq protein sequence ID" value="NP_787028.1"/>
</dbReference>
<dbReference type="UCSC" id="uc001sbb.4">
    <property type="organism name" value="human"/>
</dbReference>
<dbReference type="AGR" id="HGNC:28930"/>
<dbReference type="CTD" id="338785"/>
<dbReference type="DisGeNET" id="338785"/>
<dbReference type="GeneCards" id="KRT79"/>
<dbReference type="HGNC" id="HGNC:28930">
    <property type="gene designation" value="KRT79"/>
</dbReference>
<dbReference type="HPA" id="ENSG00000185640">
    <property type="expression patterns" value="Tissue enriched (skin)"/>
</dbReference>
<dbReference type="MIM" id="611160">
    <property type="type" value="gene"/>
</dbReference>
<dbReference type="neXtProt" id="NX_Q5XKE5"/>
<dbReference type="OpenTargets" id="ENSG00000185640"/>
<dbReference type="PharmGKB" id="PA162393725"/>
<dbReference type="VEuPathDB" id="HostDB:ENSG00000185640"/>
<dbReference type="eggNOG" id="ENOG502SPJX">
    <property type="taxonomic scope" value="Eukaryota"/>
</dbReference>
<dbReference type="GeneTree" id="ENSGT00940000161881"/>
<dbReference type="HOGENOM" id="CLU_012560_6_1_1"/>
<dbReference type="InParanoid" id="Q5XKE5"/>
<dbReference type="OMA" id="YMGQMDL"/>
<dbReference type="OrthoDB" id="2441647at2759"/>
<dbReference type="PAN-GO" id="Q5XKE5">
    <property type="GO annotations" value="4 GO annotations based on evolutionary models"/>
</dbReference>
<dbReference type="PhylomeDB" id="Q5XKE5"/>
<dbReference type="TreeFam" id="TF317854"/>
<dbReference type="PathwayCommons" id="Q5XKE5"/>
<dbReference type="Reactome" id="R-HSA-6805567">
    <property type="pathway name" value="Keratinization"/>
</dbReference>
<dbReference type="Reactome" id="R-HSA-6809371">
    <property type="pathway name" value="Formation of the cornified envelope"/>
</dbReference>
<dbReference type="SignaLink" id="Q5XKE5"/>
<dbReference type="BioGRID-ORCS" id="338785">
    <property type="hits" value="24 hits in 1148 CRISPR screens"/>
</dbReference>
<dbReference type="GeneWiki" id="KRT79"/>
<dbReference type="GenomeRNAi" id="338785"/>
<dbReference type="Pharos" id="Q5XKE5">
    <property type="development level" value="Tbio"/>
</dbReference>
<dbReference type="PRO" id="PR:Q5XKE5"/>
<dbReference type="Proteomes" id="UP000005640">
    <property type="component" value="Chromosome 12"/>
</dbReference>
<dbReference type="RNAct" id="Q5XKE5">
    <property type="molecule type" value="protein"/>
</dbReference>
<dbReference type="Bgee" id="ENSG00000185640">
    <property type="expression patterns" value="Expressed in upper leg skin and 63 other cell types or tissues"/>
</dbReference>
<dbReference type="ExpressionAtlas" id="Q5XKE5">
    <property type="expression patterns" value="baseline and differential"/>
</dbReference>
<dbReference type="GO" id="GO:0005829">
    <property type="term" value="C:cytosol"/>
    <property type="evidence" value="ECO:0000304"/>
    <property type="project" value="Reactome"/>
</dbReference>
<dbReference type="GO" id="GO:0070062">
    <property type="term" value="C:extracellular exosome"/>
    <property type="evidence" value="ECO:0007005"/>
    <property type="project" value="UniProtKB"/>
</dbReference>
<dbReference type="GO" id="GO:0045095">
    <property type="term" value="C:keratin filament"/>
    <property type="evidence" value="ECO:0000318"/>
    <property type="project" value="GO_Central"/>
</dbReference>
<dbReference type="GO" id="GO:0019899">
    <property type="term" value="F:enzyme binding"/>
    <property type="evidence" value="ECO:0000353"/>
    <property type="project" value="UniProtKB"/>
</dbReference>
<dbReference type="GO" id="GO:0030280">
    <property type="term" value="F:structural constituent of skin epidermis"/>
    <property type="evidence" value="ECO:0000318"/>
    <property type="project" value="GO_Central"/>
</dbReference>
<dbReference type="GO" id="GO:0045109">
    <property type="term" value="P:intermediate filament organization"/>
    <property type="evidence" value="ECO:0000318"/>
    <property type="project" value="GO_Central"/>
</dbReference>
<dbReference type="GO" id="GO:0031424">
    <property type="term" value="P:keratinization"/>
    <property type="evidence" value="ECO:0000318"/>
    <property type="project" value="GO_Central"/>
</dbReference>
<dbReference type="FunFam" id="1.20.5.1160:FF:000001">
    <property type="entry name" value="Keratin type II"/>
    <property type="match status" value="1"/>
</dbReference>
<dbReference type="FunFam" id="1.20.5.170:FF:000004">
    <property type="entry name" value="Keratin, type II cytoskeletal 5"/>
    <property type="match status" value="1"/>
</dbReference>
<dbReference type="FunFam" id="1.20.5.500:FF:000001">
    <property type="entry name" value="Type II keratin 23"/>
    <property type="match status" value="1"/>
</dbReference>
<dbReference type="Gene3D" id="1.20.5.170">
    <property type="match status" value="1"/>
</dbReference>
<dbReference type="Gene3D" id="1.20.5.500">
    <property type="entry name" value="Single helix bin"/>
    <property type="match status" value="1"/>
</dbReference>
<dbReference type="Gene3D" id="1.20.5.1160">
    <property type="entry name" value="Vasodilator-stimulated phosphoprotein"/>
    <property type="match status" value="1"/>
</dbReference>
<dbReference type="InterPro" id="IPR018039">
    <property type="entry name" value="IF_conserved"/>
</dbReference>
<dbReference type="InterPro" id="IPR039008">
    <property type="entry name" value="IF_rod_dom"/>
</dbReference>
<dbReference type="InterPro" id="IPR032444">
    <property type="entry name" value="Keratin_2_head"/>
</dbReference>
<dbReference type="InterPro" id="IPR003054">
    <property type="entry name" value="Keratin_II"/>
</dbReference>
<dbReference type="PANTHER" id="PTHR45616">
    <property type="entry name" value="GATA-TYPE DOMAIN-CONTAINING PROTEIN"/>
    <property type="match status" value="1"/>
</dbReference>
<dbReference type="PANTHER" id="PTHR45616:SF10">
    <property type="entry name" value="KERATIN, TYPE II CYTOSKELETAL 79"/>
    <property type="match status" value="1"/>
</dbReference>
<dbReference type="Pfam" id="PF00038">
    <property type="entry name" value="Filament"/>
    <property type="match status" value="1"/>
</dbReference>
<dbReference type="Pfam" id="PF16208">
    <property type="entry name" value="Keratin_2_head"/>
    <property type="match status" value="2"/>
</dbReference>
<dbReference type="PRINTS" id="PR01276">
    <property type="entry name" value="TYPE2KERATIN"/>
</dbReference>
<dbReference type="SMART" id="SM01391">
    <property type="entry name" value="Filament"/>
    <property type="match status" value="1"/>
</dbReference>
<dbReference type="SUPFAM" id="SSF64593">
    <property type="entry name" value="Intermediate filament protein, coiled coil region"/>
    <property type="match status" value="3"/>
</dbReference>
<dbReference type="PROSITE" id="PS00226">
    <property type="entry name" value="IF_ROD_1"/>
    <property type="match status" value="1"/>
</dbReference>
<dbReference type="PROSITE" id="PS51842">
    <property type="entry name" value="IF_ROD_2"/>
    <property type="match status" value="1"/>
</dbReference>
<sequence>MRSSVSRQTYSTKGGFSSNSASGGSGSQARTSFSSVTVSRSSGSGGGAHCGPGTGGFGSRSLYNLGGHKSISVSVAGGALLGRALGGFGFGSRAFMGQGAGRQTFGPACPPGGIQEVTVNQSLLTPLHVEIDPEIQRVRTQEREQIKTLNNKFASFIDKVRFLEQQNKVLETKWALLQEQGQNLGVTRNNLEPLFEAYLGSMRSTLDRLQSERGRLDSELRNVQDLVEDFKNKYEDEINKHTAAENEFVVLKKDVDAAYMGRMDLHGKVGTLTQEIDFLQQLYEMELSQVQTHVSNTNVVLSMDNNRNLDLDSIIAEVKAQYELIAQRSRAEAEAWYQTKYEELQVTAGKHGDNLRDTKNEIAELTRTIQRLQGEADAAKKQCQQLQTAIAEAEQRGELALKDAQKKLGDLDVALHQAKEDLTRLLRDYQELMNVKLALDVEIATYRKLLESEESRMSGECPSAVSISVTGNSTTVCGGGAASFGGGISLGGSGGATKGGFSTNVGYSTVKGGPVSAGTSILRKTTTVKTSSQRY</sequence>
<accession>Q5XKE5</accession>
<accession>Q6P465</accession>
<accession>Q7Z793</accession>
<protein>
    <recommendedName>
        <fullName>Keratin, type II cytoskeletal 79</fullName>
    </recommendedName>
    <alternativeName>
        <fullName>Cytokeratin-79</fullName>
        <shortName>CK-79</shortName>
    </alternativeName>
    <alternativeName>
        <fullName>Keratin-6-like</fullName>
        <shortName>Keratin-6L</shortName>
    </alternativeName>
    <alternativeName>
        <fullName>Keratin-79</fullName>
        <shortName>K79</shortName>
    </alternativeName>
    <alternativeName>
        <fullName>Type-II keratin Kb38</fullName>
    </alternativeName>
</protein>